<comment type="function">
    <text evidence="3">Bifunctional enzyme; part of the gene cluster that mediates the biosynthesis of flavunoidine, an alkaloidal terpenoid with a tetracyclic cage-like core connected to dimethylcadaverine via a C-N bond and acylated with 5,5-dimethyl-L-pipecolate (PubMed:31885262). The tetracyclic core is synthesized by the terpene cyclase flvE and the cytochrome P450 monooxygenase flvD (PubMed:31885262). The terpene cyclase flvE catalyzes the cyclization of farnesyl pyrophosphate (FPP) to form (1R,4R,5S)-(+)-acoradiene and the cytochrome P450 monooxygenase flvD is then responsible for oxidative conversion of (1R,4R,5S)-(+)-acoradiene into the tetracyclic cage present in the final product flavunoidine (PubMed:31885262). In parallel, the N-methyltransferase flvH dimethylates L-lysine to give N,N-dimethyl-L-Lysin which is decarboxylated by flvG to afford dimethylcadaverine (PubMed:31885262). The terpene cyclase-like protein flvF is the enzyme that attaches the dimethylcadaverine precusor at the C-7 of the tetracyclic cage to yield pre-flavunoidine (PubMed:31885262). The cytochrome monooxygenase flvC hydroxylates the C-10 position of pre-flavunoidine whereas the NRPS flvI acylates the terpenoid core at the hydroxylated C-10 with dimethylpipecolate to yield final flavunoidine (PubMed:31885262). The bifunctional enzyme flvA and the dehydrogenase flvB are responsible for the synthesis of the dimethylpipecolate precursor (PubMed:31885262). The PLP-dependent lyase domain of flvA might use L-O-acetyl-homoserine and alpha-keto-isovalerate to form an intermediary ketone that can cyclize intramolecularly to yield an imine (PubMed:31885262). The imine can be reduced by flvB to yield the 6-carboxylated pipecolate (PubMed:31885262). The C-terminal alpha-KG-dependent oxygenase domain of flvA is then proposed to catalyze the decarboxylation to yield dimethylpipecolate (PubMed:31885262).</text>
</comment>
<comment type="catalytic activity">
    <reaction evidence="3">
        <text>O-acetyl-L-homoserine + 3-methyl-2-oxobutanoate = (6S)-6-amino-3,3-dimethyl-2-oxoheptanedioate + acetate + H(+)</text>
        <dbReference type="Rhea" id="RHEA:74631"/>
        <dbReference type="ChEBI" id="CHEBI:11851"/>
        <dbReference type="ChEBI" id="CHEBI:15378"/>
        <dbReference type="ChEBI" id="CHEBI:30089"/>
        <dbReference type="ChEBI" id="CHEBI:57716"/>
        <dbReference type="ChEBI" id="CHEBI:193109"/>
    </reaction>
    <physiologicalReaction direction="left-to-right" evidence="3">
        <dbReference type="Rhea" id="RHEA:74632"/>
    </physiologicalReaction>
</comment>
<comment type="catalytic activity">
    <reaction evidence="3">
        <text>(6S)-3,3-dimethylpiperidine-2,6-dicarboxylate + 2-oxoglutarate + AH2 + O2 + H(+) = (2S)-5,5-dimethylpiperidine-2-carboxylate + succinate + A + 2 CO2 + H2O</text>
        <dbReference type="Rhea" id="RHEA:76587"/>
        <dbReference type="ChEBI" id="CHEBI:13193"/>
        <dbReference type="ChEBI" id="CHEBI:15377"/>
        <dbReference type="ChEBI" id="CHEBI:15378"/>
        <dbReference type="ChEBI" id="CHEBI:15379"/>
        <dbReference type="ChEBI" id="CHEBI:16526"/>
        <dbReference type="ChEBI" id="CHEBI:16810"/>
        <dbReference type="ChEBI" id="CHEBI:17499"/>
        <dbReference type="ChEBI" id="CHEBI:30031"/>
        <dbReference type="ChEBI" id="CHEBI:194025"/>
        <dbReference type="ChEBI" id="CHEBI:194026"/>
    </reaction>
    <physiologicalReaction direction="left-to-right" evidence="3">
        <dbReference type="Rhea" id="RHEA:76588"/>
    </physiologicalReaction>
</comment>
<comment type="cofactor">
    <cofactor evidence="1">
        <name>pyridoxal 5'-phosphate</name>
        <dbReference type="ChEBI" id="CHEBI:597326"/>
    </cofactor>
    <cofactor evidence="2">
        <name>Fe(2+)</name>
        <dbReference type="ChEBI" id="CHEBI:29033"/>
    </cofactor>
</comment>
<comment type="pathway">
    <text evidence="3">Secondary metabolite biosynthesis; terpenoid biosynthesis.</text>
</comment>
<comment type="similarity">
    <text evidence="5">In the N-terminal section; belongs to the trans-sulfuration enzymes family.</text>
</comment>
<comment type="similarity">
    <text evidence="5">In the C-terminal section; belongs to the iron/ascorbate-dependent oxidoreductase family.</text>
</comment>
<protein>
    <recommendedName>
        <fullName evidence="4">Bifunctional enzyme flvA</fullName>
    </recommendedName>
    <alternativeName>
        <fullName evidence="4">Flavunoidine biosynthesis cluster protein A</fullName>
    </alternativeName>
    <domain>
        <recommendedName>
            <fullName evidence="4">Pyridoxal 5'-phosphate-dependent lyase</fullName>
            <shortName evidence="4">PLP-dependent lyase</shortName>
            <ecNumber evidence="3">4.4.1.-</ecNumber>
        </recommendedName>
    </domain>
    <domain>
        <recommendedName>
            <fullName evidence="4">Alpha-ketoglutarate-dependent oxygenase</fullName>
            <shortName evidence="4">Alpha-KG-dependent oxygenase</shortName>
            <ecNumber evidence="3">1.14.11.-</ecNumber>
        </recommendedName>
    </domain>
</protein>
<name>FLVA_ASPFN</name>
<gene>
    <name evidence="4" type="primary">flvA</name>
    <name type="ORF">AFLA_135410</name>
</gene>
<reference key="1">
    <citation type="journal article" date="2015" name="Genome Announc.">
        <title>Genome sequence of Aspergillus flavus NRRL 3357, a strain that causes aflatoxin contamination of food and feed.</title>
        <authorList>
            <person name="Nierman W.C."/>
            <person name="Yu J."/>
            <person name="Fedorova-Abrams N.D."/>
            <person name="Losada L."/>
            <person name="Cleveland T.E."/>
            <person name="Bhatnagar D."/>
            <person name="Bennett J.W."/>
            <person name="Dean R."/>
            <person name="Payne G.A."/>
        </authorList>
    </citation>
    <scope>NUCLEOTIDE SEQUENCE [LARGE SCALE GENOMIC DNA]</scope>
    <source>
        <strain>ATCC 200026 / FGSC A1120 / IAM 13836 / NRRL 3357 / JCM 12722 / SRRC 167</strain>
    </source>
</reference>
<reference key="2">
    <citation type="journal article" date="2020" name="J. Am. Chem. Soc.">
        <title>Genome mining of alkaloidal terpenoids from a hybrid terpene and nonribosomal peptide biosynthetic pathway.</title>
        <authorList>
            <person name="Yee D.A."/>
            <person name="Kakule T.B."/>
            <person name="Cheng W."/>
            <person name="Chen M."/>
            <person name="Chong C.T.Y."/>
            <person name="Hai Y."/>
            <person name="Hang L.F."/>
            <person name="Hung Y.S."/>
            <person name="Liu N."/>
            <person name="Ohashi M."/>
            <person name="Okorafor I.C."/>
            <person name="Song Y."/>
            <person name="Tang M."/>
            <person name="Zhang Z."/>
            <person name="Tang Y."/>
        </authorList>
    </citation>
    <scope>FUNCTION</scope>
    <scope>DOMAIN</scope>
    <scope>CATALYTIC ACTIVITY</scope>
    <scope>PATHWAY</scope>
</reference>
<organism>
    <name type="scientific">Aspergillus flavus (strain ATCC 200026 / FGSC A1120 / IAM 13836 / NRRL 3357 / JCM 12722 / SRRC 167)</name>
    <dbReference type="NCBI Taxonomy" id="332952"/>
    <lineage>
        <taxon>Eukaryota</taxon>
        <taxon>Fungi</taxon>
        <taxon>Dikarya</taxon>
        <taxon>Ascomycota</taxon>
        <taxon>Pezizomycotina</taxon>
        <taxon>Eurotiomycetes</taxon>
        <taxon>Eurotiomycetidae</taxon>
        <taxon>Eurotiales</taxon>
        <taxon>Aspergillaceae</taxon>
        <taxon>Aspergillus</taxon>
        <taxon>Aspergillus subgen. Circumdati</taxon>
    </lineage>
</organism>
<feature type="chain" id="PRO_0000454477" description="Bifunctional enzyme flvA">
    <location>
        <begin position="1"/>
        <end position="823"/>
    </location>
</feature>
<feature type="region of interest" description="Pyridoxal 5'-phosphate-dependent lyase" evidence="6">
    <location>
        <begin position="56"/>
        <end position="535"/>
    </location>
</feature>
<feature type="region of interest" description="Alpha-ketoglutarate-dependent oxygenase" evidence="6">
    <location>
        <begin position="573"/>
        <end position="823"/>
    </location>
</feature>
<feature type="binding site" evidence="2">
    <location>
        <position position="703"/>
    </location>
    <ligand>
        <name>Fe cation</name>
        <dbReference type="ChEBI" id="CHEBI:24875"/>
        <note>catalytic</note>
    </ligand>
</feature>
<feature type="binding site" evidence="2">
    <location>
        <position position="705"/>
    </location>
    <ligand>
        <name>Fe cation</name>
        <dbReference type="ChEBI" id="CHEBI:24875"/>
        <note>catalytic</note>
    </ligand>
</feature>
<feature type="modified residue" description="N6-(pyridoxal phosphate)lysine" evidence="1">
    <location>
        <position position="331"/>
    </location>
</feature>
<keyword id="KW-0223">Dioxygenase</keyword>
<keyword id="KW-0379">Hydroxylation</keyword>
<keyword id="KW-0408">Iron</keyword>
<keyword id="KW-0456">Lyase</keyword>
<keyword id="KW-0479">Metal-binding</keyword>
<keyword id="KW-0511">Multifunctional enzyme</keyword>
<keyword id="KW-0560">Oxidoreductase</keyword>
<keyword id="KW-0663">Pyridoxal phosphate</keyword>
<proteinExistence type="evidence at protein level"/>
<sequence length="823" mass="94107">MHDVWRTILSRFKQNTNAIKTRFDKYRALCKELGLQRDEWSESIFLDDLEKLLKLTAKFEMALMPSNGVDTHVNGVITKINGFNNGFDTHINGFDTRINGFHTHTNGFDRGLELWQIEERYRALAQLQSTLGSFFERACPGYDQSKIPWFFDPSYYQCQGVNYDRFASPDVRDREQQLLETLQLGSNQNPKLLLMSSGMASFTVIQQYVVQQLNYGDTVVVSPYIYFESFQPMRSQKSLTVVNAKGFDPESIIEAAERNNARAVFLDPMCNTVGLDTIDIRRFAHLVANRGGWADRLVIVDGTLVSGGMQLYDWFDGPHCPKVLYYESAHKYIQLGLDLIMCGYVVMPEDLVPAIQLIRQITGTVLYSRNASLLPPIDKTIFNFRMSRLTTNAEKLHRLLDAESRNMAEVTFPHHWRDYRWRHGGNVVTVRFHGEGLNKRSNLERCCDDILRAAEEEGVQMVKGASLGFSTTRIFVADAFFENTDPFLRISVGVQSEDIETVARAVLSGIKRYCMSAVPVNLDVGQRLYDAKFYIAMASMLEVRARYAKDRVVFMEGEWLVPILKALGAREEDFDALQQVSHHLGKDPTVDYRTIRNGLFYFNFENKAIQRFQKQRFTLTVQENYKRHDSGLPRDFPEVRGDLQYNTVLQALMVAKAFIMNKVDVEPRAHLDYSSPNFLCNVFNIRTFTEKNILGEPTLEGVHADGADHTMTTFLGCTNMRSDSGITFIHDQKEITGIPATEAQPSLIKHRFQHRHFLDSLLFADNEAKHSLTSVFQEDVSKRATRDMLLFLTRKPKLAGHSSGSVDAMEPHKTLPMNVPLWL</sequence>
<evidence type="ECO:0000250" key="1">
    <source>
        <dbReference type="UniProtKB" id="P06721"/>
    </source>
</evidence>
<evidence type="ECO:0000250" key="2">
    <source>
        <dbReference type="UniProtKB" id="Q96323"/>
    </source>
</evidence>
<evidence type="ECO:0000269" key="3">
    <source>
    </source>
</evidence>
<evidence type="ECO:0000303" key="4">
    <source>
    </source>
</evidence>
<evidence type="ECO:0000305" key="5"/>
<evidence type="ECO:0000305" key="6">
    <source>
    </source>
</evidence>
<dbReference type="EC" id="4.4.1.-" evidence="3"/>
<dbReference type="EC" id="1.14.11.-" evidence="3"/>
<dbReference type="EMBL" id="EQ963478">
    <property type="protein sequence ID" value="EED50778.1"/>
    <property type="molecule type" value="Genomic_DNA"/>
</dbReference>
<dbReference type="RefSeq" id="XP_002379554.1">
    <property type="nucleotide sequence ID" value="XM_002379513.1"/>
</dbReference>
<dbReference type="SMR" id="B8NHD6"/>
<dbReference type="STRING" id="332952.B8NHD6"/>
<dbReference type="EnsemblFungi" id="EED50778">
    <property type="protein sequence ID" value="EED50778"/>
    <property type="gene ID" value="AFLA_135410"/>
</dbReference>
<dbReference type="VEuPathDB" id="FungiDB:AFLA_005895"/>
<dbReference type="eggNOG" id="KOG1250">
    <property type="taxonomic scope" value="Eukaryota"/>
</dbReference>
<dbReference type="HOGENOM" id="CLU_335849_0_0_1"/>
<dbReference type="UniPathway" id="UPA00213"/>
<dbReference type="GO" id="GO:0005737">
    <property type="term" value="C:cytoplasm"/>
    <property type="evidence" value="ECO:0007669"/>
    <property type="project" value="TreeGrafter"/>
</dbReference>
<dbReference type="GO" id="GO:0016846">
    <property type="term" value="F:carbon-sulfur lyase activity"/>
    <property type="evidence" value="ECO:0007669"/>
    <property type="project" value="TreeGrafter"/>
</dbReference>
<dbReference type="GO" id="GO:0051213">
    <property type="term" value="F:dioxygenase activity"/>
    <property type="evidence" value="ECO:0007669"/>
    <property type="project" value="UniProtKB-KW"/>
</dbReference>
<dbReference type="GO" id="GO:0046872">
    <property type="term" value="F:metal ion binding"/>
    <property type="evidence" value="ECO:0007669"/>
    <property type="project" value="UniProtKB-KW"/>
</dbReference>
<dbReference type="GO" id="GO:0030170">
    <property type="term" value="F:pyridoxal phosphate binding"/>
    <property type="evidence" value="ECO:0007669"/>
    <property type="project" value="InterPro"/>
</dbReference>
<dbReference type="GO" id="GO:0016114">
    <property type="term" value="P:terpenoid biosynthetic process"/>
    <property type="evidence" value="ECO:0007669"/>
    <property type="project" value="UniProtKB-UniPathway"/>
</dbReference>
<dbReference type="GO" id="GO:0019346">
    <property type="term" value="P:transsulfuration"/>
    <property type="evidence" value="ECO:0007669"/>
    <property type="project" value="InterPro"/>
</dbReference>
<dbReference type="Gene3D" id="2.60.120.620">
    <property type="entry name" value="q2cbj1_9rhob like domain"/>
    <property type="match status" value="1"/>
</dbReference>
<dbReference type="Gene3D" id="3.40.640.10">
    <property type="entry name" value="Type I PLP-dependent aspartate aminotransferase-like (Major domain)"/>
    <property type="match status" value="1"/>
</dbReference>
<dbReference type="InterPro" id="IPR018724">
    <property type="entry name" value="2OG-Fe_dioxygenase"/>
</dbReference>
<dbReference type="InterPro" id="IPR000277">
    <property type="entry name" value="Cys/Met-Metab_PyrdxlP-dep_enz"/>
</dbReference>
<dbReference type="InterPro" id="IPR015424">
    <property type="entry name" value="PyrdxlP-dep_Trfase"/>
</dbReference>
<dbReference type="InterPro" id="IPR015421">
    <property type="entry name" value="PyrdxlP-dep_Trfase_major"/>
</dbReference>
<dbReference type="PANTHER" id="PTHR11808:SF50">
    <property type="entry name" value="CYSTATHIONINE BETA-LYASE"/>
    <property type="match status" value="1"/>
</dbReference>
<dbReference type="PANTHER" id="PTHR11808">
    <property type="entry name" value="TRANS-SULFURATION ENZYME FAMILY MEMBER"/>
    <property type="match status" value="1"/>
</dbReference>
<dbReference type="Pfam" id="PF10014">
    <property type="entry name" value="2OG-Fe_Oxy_2"/>
    <property type="match status" value="1"/>
</dbReference>
<dbReference type="Pfam" id="PF01053">
    <property type="entry name" value="Cys_Met_Meta_PP"/>
    <property type="match status" value="1"/>
</dbReference>
<dbReference type="SUPFAM" id="SSF53383">
    <property type="entry name" value="PLP-dependent transferases"/>
    <property type="match status" value="1"/>
</dbReference>
<accession>B8NHD6</accession>